<name>PIGQ_MOUSE</name>
<protein>
    <recommendedName>
        <fullName evidence="3">Phosphatidylinositol N-acetylglucosaminyltransferase subunit Q</fullName>
    </recommendedName>
    <alternativeName>
        <fullName>MGpi1p</fullName>
    </alternativeName>
    <alternativeName>
        <fullName>N-acetylglucosamyl transferase component GPI1</fullName>
    </alternativeName>
    <alternativeName>
        <fullName>Phosphatidylinositol-glycan biosynthesis class Q protein</fullName>
        <shortName>PIG-Q</shortName>
    </alternativeName>
</protein>
<organism>
    <name type="scientific">Mus musculus</name>
    <name type="common">Mouse</name>
    <dbReference type="NCBI Taxonomy" id="10090"/>
    <lineage>
        <taxon>Eukaryota</taxon>
        <taxon>Metazoa</taxon>
        <taxon>Chordata</taxon>
        <taxon>Craniata</taxon>
        <taxon>Vertebrata</taxon>
        <taxon>Euteleostomi</taxon>
        <taxon>Mammalia</taxon>
        <taxon>Eutheria</taxon>
        <taxon>Euarchontoglires</taxon>
        <taxon>Glires</taxon>
        <taxon>Rodentia</taxon>
        <taxon>Myomorpha</taxon>
        <taxon>Muroidea</taxon>
        <taxon>Muridae</taxon>
        <taxon>Murinae</taxon>
        <taxon>Mus</taxon>
        <taxon>Mus</taxon>
    </lineage>
</organism>
<gene>
    <name evidence="4" type="primary">Pigq</name>
    <name type="synonym">Gpi1h</name>
    <name type="synonym">Mgpi1</name>
</gene>
<comment type="function">
    <text evidence="1">Part of the glycosylphosphatidylinositol-N-acetylglucosaminyltransferase (GPI-GnT) complex that catalyzes the transfer of N-acetylglucosamine from UDP-N-acetylglucosamine to phosphatidylinositol and participates in the first step of GPI biosynthesis.</text>
</comment>
<comment type="pathway">
    <text evidence="1">Glycolipid biosynthesis; glycosylphosphatidylinositol-anchor biosynthesis.</text>
</comment>
<comment type="subunit">
    <text evidence="1">Component of the glycosylphosphatidylinositol-N-acetylglucosaminyltransferase (GPI-GnT) complex composed at least by PIGA, PIGC, PIGH, PIGP, PIGQ, PIGY and DPM2. Interacts with PIGA, PIGH and PIGC.</text>
</comment>
<comment type="subcellular location">
    <subcellularLocation>
        <location evidence="3">Membrane</location>
        <topology evidence="3">Multi-pass membrane protein</topology>
    </subcellularLocation>
</comment>
<comment type="similarity">
    <text evidence="3">Belongs to the PIGQ family.</text>
</comment>
<accession>Q9QYT7</accession>
<accession>O35120</accession>
<accession>O35456</accession>
<accession>Q99L11</accession>
<evidence type="ECO:0000250" key="1">
    <source>
        <dbReference type="UniProtKB" id="Q9BRB3"/>
    </source>
</evidence>
<evidence type="ECO:0000255" key="2"/>
<evidence type="ECO:0000305" key="3"/>
<evidence type="ECO:0000312" key="4">
    <source>
        <dbReference type="MGI" id="MGI:1333114"/>
    </source>
</evidence>
<proteinExistence type="evidence at protein level"/>
<reference key="1">
    <citation type="journal article" date="1998" name="Biochem. J.">
        <title>Human and mouse Gpi1p homologues restore glycosylphosphatidylinositol membrane anchor biosynthesis in yeast mutants.</title>
        <authorList>
            <person name="Tiede A."/>
            <person name="Schubert J."/>
            <person name="Nischan C."/>
            <person name="Jensen I."/>
            <person name="Westfall B."/>
            <person name="Taron C.H."/>
            <person name="Orlean P."/>
            <person name="Schmidt R.E."/>
        </authorList>
    </citation>
    <scope>NUCLEOTIDE SEQUENCE [MRNA]</scope>
    <source>
        <strain>C57BL/6J</strain>
        <tissue>Brain</tissue>
    </source>
</reference>
<reference key="2">
    <citation type="journal article" date="1999" name="J. Biol. Chem.">
        <title>GPI1 stabilizes an enzyme essential in the first step of glycosylphosphatidylinositol biosynthesis.</title>
        <authorList>
            <person name="Hong Y."/>
            <person name="Ohishi K."/>
            <person name="Watanabe R."/>
            <person name="Endo Y."/>
            <person name="Maeda Y."/>
            <person name="Kinoshita T."/>
        </authorList>
    </citation>
    <scope>NUCLEOTIDE SEQUENCE [GENOMIC DNA]</scope>
    <source>
        <strain>129</strain>
        <tissue>Liver</tissue>
    </source>
</reference>
<reference key="3">
    <citation type="journal article" date="2004" name="Genome Res.">
        <title>The status, quality, and expansion of the NIH full-length cDNA project: the Mammalian Gene Collection (MGC).</title>
        <authorList>
            <consortium name="The MGC Project Team"/>
        </authorList>
    </citation>
    <scope>NUCLEOTIDE SEQUENCE [LARGE SCALE MRNA]</scope>
    <source>
        <tissue>Mammary tumor</tissue>
        <tissue>Salivary gland</tissue>
    </source>
</reference>
<reference key="4">
    <citation type="journal article" date="2010" name="Cell">
        <title>A tissue-specific atlas of mouse protein phosphorylation and expression.</title>
        <authorList>
            <person name="Huttlin E.L."/>
            <person name="Jedrychowski M.P."/>
            <person name="Elias J.E."/>
            <person name="Goswami T."/>
            <person name="Rad R."/>
            <person name="Beausoleil S.A."/>
            <person name="Villen J."/>
            <person name="Haas W."/>
            <person name="Sowa M.E."/>
            <person name="Gygi S.P."/>
        </authorList>
    </citation>
    <scope>IDENTIFICATION BY MASS SPECTROMETRY [LARGE SCALE ANALYSIS]</scope>
    <source>
        <tissue>Spleen</tissue>
    </source>
</reference>
<dbReference type="EMBL" id="AF030178">
    <property type="protein sequence ID" value="AAC79574.1"/>
    <property type="molecule type" value="mRNA"/>
</dbReference>
<dbReference type="EMBL" id="AB008895">
    <property type="protein sequence ID" value="BAA23615.1"/>
    <property type="molecule type" value="mRNA"/>
</dbReference>
<dbReference type="EMBL" id="AB008921">
    <property type="protein sequence ID" value="BAA84658.1"/>
    <property type="molecule type" value="Genomic_DNA"/>
</dbReference>
<dbReference type="EMBL" id="BC014287">
    <property type="protein sequence ID" value="AAH14287.1"/>
    <property type="molecule type" value="mRNA"/>
</dbReference>
<dbReference type="EMBL" id="BC003917">
    <property type="protein sequence ID" value="AAH03917.1"/>
    <property type="molecule type" value="mRNA"/>
</dbReference>
<dbReference type="CCDS" id="CCDS28538.1"/>
<dbReference type="RefSeq" id="NP_001400204.1">
    <property type="nucleotide sequence ID" value="NM_001413275.1"/>
</dbReference>
<dbReference type="RefSeq" id="NP_001400205.1">
    <property type="nucleotide sequence ID" value="NM_001413276.1"/>
</dbReference>
<dbReference type="RefSeq" id="NP_035952.2">
    <property type="nucleotide sequence ID" value="NM_011822.4"/>
</dbReference>
<dbReference type="RefSeq" id="XP_030105362.1">
    <property type="nucleotide sequence ID" value="XM_030249502.2"/>
</dbReference>
<dbReference type="BioGRID" id="200022">
    <property type="interactions" value="1"/>
</dbReference>
<dbReference type="FunCoup" id="Q9QYT7">
    <property type="interactions" value="520"/>
</dbReference>
<dbReference type="STRING" id="10090.ENSMUSP00000094981"/>
<dbReference type="iPTMnet" id="Q9QYT7"/>
<dbReference type="PhosphoSitePlus" id="Q9QYT7"/>
<dbReference type="SwissPalm" id="Q9QYT7"/>
<dbReference type="PaxDb" id="10090-ENSMUSP00000026823"/>
<dbReference type="ProteomicsDB" id="287725"/>
<dbReference type="Antibodypedia" id="22728">
    <property type="antibodies" value="84 antibodies from 22 providers"/>
</dbReference>
<dbReference type="DNASU" id="14755"/>
<dbReference type="Ensembl" id="ENSMUST00000026823.16">
    <property type="protein sequence ID" value="ENSMUSP00000026823.9"/>
    <property type="gene ID" value="ENSMUSG00000025728.17"/>
</dbReference>
<dbReference type="Ensembl" id="ENSMUST00000208043.2">
    <property type="protein sequence ID" value="ENSMUSP00000146704.2"/>
    <property type="gene ID" value="ENSMUSG00000025728.17"/>
</dbReference>
<dbReference type="GeneID" id="14755"/>
<dbReference type="KEGG" id="mmu:14755"/>
<dbReference type="UCSC" id="uc008bcp.2">
    <property type="organism name" value="mouse"/>
</dbReference>
<dbReference type="AGR" id="MGI:1333114"/>
<dbReference type="CTD" id="9091"/>
<dbReference type="MGI" id="MGI:1333114">
    <property type="gene designation" value="Pigq"/>
</dbReference>
<dbReference type="VEuPathDB" id="HostDB:ENSMUSG00000025728"/>
<dbReference type="eggNOG" id="KOG1183">
    <property type="taxonomic scope" value="Eukaryota"/>
</dbReference>
<dbReference type="GeneTree" id="ENSGT00390000004994"/>
<dbReference type="HOGENOM" id="CLU_021157_2_0_1"/>
<dbReference type="InParanoid" id="Q9QYT7"/>
<dbReference type="OMA" id="HKGDKQN"/>
<dbReference type="OrthoDB" id="70250at2759"/>
<dbReference type="PhylomeDB" id="Q9QYT7"/>
<dbReference type="TreeFam" id="TF321258"/>
<dbReference type="Reactome" id="R-MMU-162710">
    <property type="pathway name" value="Synthesis of glycosylphosphatidylinositol (GPI)"/>
</dbReference>
<dbReference type="UniPathway" id="UPA00196"/>
<dbReference type="BioGRID-ORCS" id="14755">
    <property type="hits" value="4 hits in 80 CRISPR screens"/>
</dbReference>
<dbReference type="ChiTaRS" id="Pigq">
    <property type="organism name" value="mouse"/>
</dbReference>
<dbReference type="PRO" id="PR:Q9QYT7"/>
<dbReference type="Proteomes" id="UP000000589">
    <property type="component" value="Chromosome 17"/>
</dbReference>
<dbReference type="RNAct" id="Q9QYT7">
    <property type="molecule type" value="protein"/>
</dbReference>
<dbReference type="Bgee" id="ENSMUSG00000025728">
    <property type="expression patterns" value="Expressed in fetal liver hematopoietic progenitor cell and 267 other cell types or tissues"/>
</dbReference>
<dbReference type="ExpressionAtlas" id="Q9QYT7">
    <property type="expression patterns" value="baseline and differential"/>
</dbReference>
<dbReference type="GO" id="GO:0000506">
    <property type="term" value="C:glycosylphosphatidylinositol-N-acetylglucosaminyltransferase (GPI-GnT) complex"/>
    <property type="evidence" value="ECO:0000314"/>
    <property type="project" value="MGI"/>
</dbReference>
<dbReference type="GO" id="GO:0006506">
    <property type="term" value="P:GPI anchor biosynthetic process"/>
    <property type="evidence" value="ECO:0000315"/>
    <property type="project" value="MGI"/>
</dbReference>
<dbReference type="InterPro" id="IPR007720">
    <property type="entry name" value="PigQ/GPI1"/>
</dbReference>
<dbReference type="PANTHER" id="PTHR21329:SF3">
    <property type="entry name" value="PHOSPHATIDYLINOSITOL N-ACETYLGLUCOSAMINYLTRANSFERASE SUBUNIT Q"/>
    <property type="match status" value="1"/>
</dbReference>
<dbReference type="PANTHER" id="PTHR21329">
    <property type="entry name" value="PHOSPHATIDYLINOSITOL N-ACETYLGLUCOSAMINYLTRANSFERASE SUBUNIT Q-RELATED"/>
    <property type="match status" value="1"/>
</dbReference>
<dbReference type="Pfam" id="PF05024">
    <property type="entry name" value="Gpi1"/>
    <property type="match status" value="1"/>
</dbReference>
<keyword id="KW-0337">GPI-anchor biosynthesis</keyword>
<keyword id="KW-0472">Membrane</keyword>
<keyword id="KW-1185">Reference proteome</keyword>
<keyword id="KW-0812">Transmembrane</keyword>
<keyword id="KW-1133">Transmembrane helix</keyword>
<feature type="chain" id="PRO_0000215665" description="Phosphatidylinositol N-acetylglucosaminyltransferase subunit Q">
    <location>
        <begin position="1"/>
        <end position="581"/>
    </location>
</feature>
<feature type="transmembrane region" description="Helical" evidence="2">
    <location>
        <begin position="276"/>
        <end position="298"/>
    </location>
</feature>
<feature type="transmembrane region" description="Helical" evidence="2">
    <location>
        <begin position="344"/>
        <end position="366"/>
    </location>
</feature>
<feature type="transmembrane region" description="Helical" evidence="2">
    <location>
        <begin position="381"/>
        <end position="403"/>
    </location>
</feature>
<feature type="transmembrane region" description="Helical" evidence="2">
    <location>
        <begin position="446"/>
        <end position="468"/>
    </location>
</feature>
<feature type="transmembrane region" description="Helical" evidence="2">
    <location>
        <begin position="478"/>
        <end position="500"/>
    </location>
</feature>
<feature type="sequence conflict" description="In Ref. 1; AAC79574." evidence="3" ref="1">
    <original>V</original>
    <variation>A</variation>
    <location>
        <position position="5"/>
    </location>
</feature>
<feature type="sequence conflict" description="In Ref. 1; AAC79574." evidence="3" ref="1">
    <original>S</original>
    <variation>N</variation>
    <location>
        <position position="28"/>
    </location>
</feature>
<feature type="sequence conflict" description="In Ref. 1; AAC79574." evidence="3" ref="1">
    <original>PVA</original>
    <variation>QVT</variation>
    <location>
        <begin position="59"/>
        <end position="61"/>
    </location>
</feature>
<feature type="sequence conflict" description="In Ref. 1; AAC79574." evidence="3" ref="1">
    <original>Q</original>
    <variation>E</variation>
    <location>
        <position position="74"/>
    </location>
</feature>
<feature type="sequence conflict" description="In Ref. 1; AAC79574." evidence="3" ref="1">
    <original>N</original>
    <variation>K</variation>
    <location>
        <position position="79"/>
    </location>
</feature>
<feature type="sequence conflict" description="In Ref. 1; AAC79574." evidence="3" ref="1">
    <original>T</original>
    <variation>A</variation>
    <location>
        <position position="86"/>
    </location>
</feature>
<feature type="sequence conflict" description="In Ref. 1; AAC79574." evidence="3" ref="1">
    <original>D</original>
    <variation>N</variation>
    <location>
        <position position="91"/>
    </location>
</feature>
<feature type="sequence conflict" description="In Ref. 1; AAC79574." evidence="3" ref="1">
    <original>R</original>
    <variation>K</variation>
    <location>
        <position position="100"/>
    </location>
</feature>
<feature type="sequence conflict" description="In Ref. 1; AAC79574." evidence="3" ref="1">
    <original>L</original>
    <variation>F</variation>
    <location>
        <position position="104"/>
    </location>
</feature>
<feature type="sequence conflict" description="In Ref. 1; AAC79574." evidence="3" ref="1">
    <original>P</original>
    <variation>H</variation>
    <location>
        <position position="112"/>
    </location>
</feature>
<feature type="sequence conflict" description="In Ref. 1; AAC79574." evidence="3" ref="1">
    <original>NPLDMHPEE</original>
    <variation>STLDTPTED</variation>
    <location>
        <begin position="116"/>
        <end position="124"/>
    </location>
</feature>
<feature type="sequence conflict" description="In Ref. 1; AAC79574." evidence="3" ref="1">
    <original>A</original>
    <variation>D</variation>
    <location>
        <position position="149"/>
    </location>
</feature>
<feature type="sequence conflict" description="In Ref. 1; AAC79574." evidence="3" ref="1">
    <original>M</original>
    <variation>I</variation>
    <location>
        <position position="152"/>
    </location>
</feature>
<feature type="sequence conflict" description="In Ref. 1; AAC79574." evidence="3" ref="1">
    <original>T</original>
    <variation>S</variation>
    <location>
        <position position="155"/>
    </location>
</feature>
<feature type="sequence conflict" description="In Ref. 1; AAC79574." evidence="3" ref="1">
    <original>R</original>
    <variation>G</variation>
    <location>
        <position position="184"/>
    </location>
</feature>
<feature type="sequence conflict" description="In Ref. 1; AAC79574." evidence="3" ref="1">
    <original>W</original>
    <variation>G</variation>
    <location>
        <position position="235"/>
    </location>
</feature>
<feature type="sequence conflict" description="In Ref. 1; AAC79574." evidence="3" ref="1">
    <original>S</original>
    <variation>A</variation>
    <location>
        <position position="238"/>
    </location>
</feature>
<feature type="sequence conflict" description="In Ref. 1; AAC79574." evidence="3" ref="1">
    <original>H</original>
    <variation>Q</variation>
    <location>
        <position position="251"/>
    </location>
</feature>
<feature type="sequence conflict" description="In Ref. 1; AAC79574." evidence="3" ref="1">
    <original>N</original>
    <variation>S</variation>
    <location>
        <position position="268"/>
    </location>
</feature>
<feature type="sequence conflict" description="In Ref. 2; BAA23615." evidence="3" ref="2">
    <original>Y</original>
    <variation>C</variation>
    <location>
        <position position="467"/>
    </location>
</feature>
<feature type="sequence conflict" description="In Ref. 1; AAC79574." evidence="3" ref="1">
    <original>SYNHVMHI</original>
    <variation>PYSHVVHT</variation>
    <location>
        <begin position="536"/>
        <end position="543"/>
    </location>
</feature>
<feature type="sequence conflict" description="In Ref. 1; AAC79574." evidence="3" ref="1">
    <original>R</original>
    <variation>S</variation>
    <location>
        <position position="548"/>
    </location>
</feature>
<feature type="sequence conflict" description="In Ref. 1; AAC79574." evidence="3" ref="1">
    <original>V</original>
    <variation>F</variation>
    <location>
        <position position="565"/>
    </location>
</feature>
<sequence>MVLKVFFPTCCASADSGLLVGRWVPGQSSAVILAVVHFPFIPIQVKELLAQVQKASQVPVAVLGTWCHRQQEPQESLGNFLEGLGTIFSHDPWLQLCRERGTRLWSCKATYPQMSNPLDMHPEEQVMLIFYDQRKLLLSWLHPPPVLPACQMGDTTASTGGLADIFDTVARSEVLFRNDQFDERPVRLSHWQSEGVEASILVELAKRASGPVCLLLASLLSLISAASACRLWKLWPLSFIRSKLSTCEQLHHRLKHLSFIFSTEKAQNPMQLMRKANMLVSVLLDVALGLLLLSWLHSNNRIGQLANALVPVADRVAEELQHLLQWLMGAPAGLKMNRALDQVLGRFFLYHIHLWISYIHLMSPFIEHILWHVGLSACLGLTVALSIFSDIIALLTFHIYCFYVYGARLYCLKIYGLSSLWRLFRGKKWNVLRQRVDSCSYDLDQLFIGTLLFTILVFLLPTTALYYLVFTLLRLLVITVQGLIHLLVDLINSLPLYSLGLRLCRPYRLAAGVKFRVLEKEAGRPLRLLMQINPLSYNHVMHIYRLPRCGCHPKHSWGTLCRKLVFGELIYPWRQREDKQD</sequence>